<protein>
    <recommendedName>
        <fullName evidence="1">Ribonuclease Y</fullName>
        <shortName evidence="1">RNase Y</shortName>
        <ecNumber evidence="1">3.1.-.-</ecNumber>
    </recommendedName>
</protein>
<name>RNY_ACHLI</name>
<organism>
    <name type="scientific">Acholeplasma laidlawii (strain PG-8A)</name>
    <dbReference type="NCBI Taxonomy" id="441768"/>
    <lineage>
        <taxon>Bacteria</taxon>
        <taxon>Bacillati</taxon>
        <taxon>Mycoplasmatota</taxon>
        <taxon>Mollicutes</taxon>
        <taxon>Acholeplasmatales</taxon>
        <taxon>Acholeplasmataceae</taxon>
        <taxon>Acholeplasma</taxon>
    </lineage>
</organism>
<reference key="1">
    <citation type="journal article" date="2011" name="J. Bacteriol.">
        <title>Complete genome and proteome of Acholeplasma laidlawii.</title>
        <authorList>
            <person name="Lazarev V.N."/>
            <person name="Levitskii S.A."/>
            <person name="Basovskii Y.I."/>
            <person name="Chukin M.M."/>
            <person name="Akopian T.A."/>
            <person name="Vereshchagin V.V."/>
            <person name="Kostrjukova E.S."/>
            <person name="Kovaleva G.Y."/>
            <person name="Kazanov M.D."/>
            <person name="Malko D.B."/>
            <person name="Vitreschak A.G."/>
            <person name="Sernova N.V."/>
            <person name="Gelfand M.S."/>
            <person name="Demina I.A."/>
            <person name="Serebryakova M.V."/>
            <person name="Galyamina M.A."/>
            <person name="Vtyurin N.N."/>
            <person name="Rogov S.I."/>
            <person name="Alexeev D.G."/>
            <person name="Ladygina V.G."/>
            <person name="Govorun V.M."/>
        </authorList>
    </citation>
    <scope>NUCLEOTIDE SEQUENCE [LARGE SCALE GENOMIC DNA]</scope>
    <source>
        <strain>PG-8A</strain>
    </source>
</reference>
<dbReference type="EC" id="3.1.-.-" evidence="1"/>
<dbReference type="EMBL" id="CP000896">
    <property type="protein sequence ID" value="ABX81499.1"/>
    <property type="molecule type" value="Genomic_DNA"/>
</dbReference>
<dbReference type="SMR" id="A9NGL9"/>
<dbReference type="STRING" id="441768.ACL_0886"/>
<dbReference type="KEGG" id="acl:ACL_0886"/>
<dbReference type="eggNOG" id="COG1418">
    <property type="taxonomic scope" value="Bacteria"/>
</dbReference>
<dbReference type="eggNOG" id="COG4372">
    <property type="taxonomic scope" value="Bacteria"/>
</dbReference>
<dbReference type="HOGENOM" id="CLU_028328_1_0_14"/>
<dbReference type="OrthoDB" id="9803205at2"/>
<dbReference type="Proteomes" id="UP000008558">
    <property type="component" value="Chromosome"/>
</dbReference>
<dbReference type="GO" id="GO:0005886">
    <property type="term" value="C:plasma membrane"/>
    <property type="evidence" value="ECO:0007669"/>
    <property type="project" value="UniProtKB-SubCell"/>
</dbReference>
<dbReference type="GO" id="GO:0003723">
    <property type="term" value="F:RNA binding"/>
    <property type="evidence" value="ECO:0007669"/>
    <property type="project" value="UniProtKB-UniRule"/>
</dbReference>
<dbReference type="GO" id="GO:0004521">
    <property type="term" value="F:RNA endonuclease activity"/>
    <property type="evidence" value="ECO:0007669"/>
    <property type="project" value="UniProtKB-UniRule"/>
</dbReference>
<dbReference type="GO" id="GO:0006402">
    <property type="term" value="P:mRNA catabolic process"/>
    <property type="evidence" value="ECO:0007669"/>
    <property type="project" value="UniProtKB-UniRule"/>
</dbReference>
<dbReference type="CDD" id="cd00077">
    <property type="entry name" value="HDc"/>
    <property type="match status" value="1"/>
</dbReference>
<dbReference type="CDD" id="cd22431">
    <property type="entry name" value="KH-I_RNaseY"/>
    <property type="match status" value="1"/>
</dbReference>
<dbReference type="FunFam" id="1.10.3210.10:FF:000003">
    <property type="entry name" value="Ribonuclease Y"/>
    <property type="match status" value="1"/>
</dbReference>
<dbReference type="Gene3D" id="1.10.3210.10">
    <property type="entry name" value="Hypothetical protein af1432"/>
    <property type="match status" value="1"/>
</dbReference>
<dbReference type="Gene3D" id="3.30.1370.10">
    <property type="entry name" value="K Homology domain, type 1"/>
    <property type="match status" value="1"/>
</dbReference>
<dbReference type="HAMAP" id="MF_00335">
    <property type="entry name" value="RNase_Y"/>
    <property type="match status" value="1"/>
</dbReference>
<dbReference type="InterPro" id="IPR003607">
    <property type="entry name" value="HD/PDEase_dom"/>
</dbReference>
<dbReference type="InterPro" id="IPR006674">
    <property type="entry name" value="HD_domain"/>
</dbReference>
<dbReference type="InterPro" id="IPR006675">
    <property type="entry name" value="HDIG_dom"/>
</dbReference>
<dbReference type="InterPro" id="IPR004087">
    <property type="entry name" value="KH_dom"/>
</dbReference>
<dbReference type="InterPro" id="IPR004088">
    <property type="entry name" value="KH_dom_type_1"/>
</dbReference>
<dbReference type="InterPro" id="IPR036612">
    <property type="entry name" value="KH_dom_type_1_sf"/>
</dbReference>
<dbReference type="InterPro" id="IPR017705">
    <property type="entry name" value="Ribonuclease_Y"/>
</dbReference>
<dbReference type="InterPro" id="IPR022711">
    <property type="entry name" value="RNase_Y_N"/>
</dbReference>
<dbReference type="NCBIfam" id="TIGR00277">
    <property type="entry name" value="HDIG"/>
    <property type="match status" value="1"/>
</dbReference>
<dbReference type="NCBIfam" id="TIGR03319">
    <property type="entry name" value="RNase_Y"/>
    <property type="match status" value="1"/>
</dbReference>
<dbReference type="PANTHER" id="PTHR12826">
    <property type="entry name" value="RIBONUCLEASE Y"/>
    <property type="match status" value="1"/>
</dbReference>
<dbReference type="PANTHER" id="PTHR12826:SF15">
    <property type="entry name" value="RIBONUCLEASE Y"/>
    <property type="match status" value="1"/>
</dbReference>
<dbReference type="Pfam" id="PF01966">
    <property type="entry name" value="HD"/>
    <property type="match status" value="1"/>
</dbReference>
<dbReference type="Pfam" id="PF00013">
    <property type="entry name" value="KH_1"/>
    <property type="match status" value="1"/>
</dbReference>
<dbReference type="Pfam" id="PF12072">
    <property type="entry name" value="RNase_Y_N"/>
    <property type="match status" value="1"/>
</dbReference>
<dbReference type="SMART" id="SM00471">
    <property type="entry name" value="HDc"/>
    <property type="match status" value="1"/>
</dbReference>
<dbReference type="SMART" id="SM00322">
    <property type="entry name" value="KH"/>
    <property type="match status" value="1"/>
</dbReference>
<dbReference type="SUPFAM" id="SSF54791">
    <property type="entry name" value="Eukaryotic type KH-domain (KH-domain type I)"/>
    <property type="match status" value="1"/>
</dbReference>
<dbReference type="SUPFAM" id="SSF109604">
    <property type="entry name" value="HD-domain/PDEase-like"/>
    <property type="match status" value="1"/>
</dbReference>
<dbReference type="PROSITE" id="PS51831">
    <property type="entry name" value="HD"/>
    <property type="match status" value="1"/>
</dbReference>
<dbReference type="PROSITE" id="PS50084">
    <property type="entry name" value="KH_TYPE_1"/>
    <property type="match status" value="1"/>
</dbReference>
<comment type="function">
    <text evidence="1">Endoribonuclease that initiates mRNA decay.</text>
</comment>
<comment type="subcellular location">
    <subcellularLocation>
        <location evidence="1">Cell membrane</location>
        <topology evidence="1">Single-pass membrane protein</topology>
    </subcellularLocation>
</comment>
<comment type="similarity">
    <text evidence="1">Belongs to the RNase Y family.</text>
</comment>
<feature type="chain" id="PRO_0000344806" description="Ribonuclease Y">
    <location>
        <begin position="1"/>
        <end position="526"/>
    </location>
</feature>
<feature type="transmembrane region" description="Helical" evidence="1">
    <location>
        <begin position="10"/>
        <end position="30"/>
    </location>
</feature>
<feature type="domain" description="KH" evidence="1">
    <location>
        <begin position="216"/>
        <end position="279"/>
    </location>
</feature>
<feature type="domain" description="HD" evidence="2">
    <location>
        <begin position="342"/>
        <end position="435"/>
    </location>
</feature>
<evidence type="ECO:0000255" key="1">
    <source>
        <dbReference type="HAMAP-Rule" id="MF_00335"/>
    </source>
</evidence>
<evidence type="ECO:0000255" key="2">
    <source>
        <dbReference type="PROSITE-ProRule" id="PRU01175"/>
    </source>
</evidence>
<gene>
    <name evidence="1" type="primary">rny</name>
    <name type="ordered locus">ACL_0886</name>
</gene>
<accession>A9NGL9</accession>
<keyword id="KW-1003">Cell membrane</keyword>
<keyword id="KW-0255">Endonuclease</keyword>
<keyword id="KW-0378">Hydrolase</keyword>
<keyword id="KW-0472">Membrane</keyword>
<keyword id="KW-0540">Nuclease</keyword>
<keyword id="KW-1185">Reference proteome</keyword>
<keyword id="KW-0694">RNA-binding</keyword>
<keyword id="KW-0812">Transmembrane</keyword>
<keyword id="KW-1133">Transmembrane helix</keyword>
<proteinExistence type="inferred from homology"/>
<sequence length="526" mass="59045">MFNVDTPALITFILLIVVGALGGALVGYFIRVAQHEKSLRLAREEAERIIEDGKKEADRTKREMVFEAKQEILTLRKEFDEDIKDRRQIVMNLEEKATQRENALNQRSQYLDKREIGLDAKEERHNERKEQLDIQYSKVEELIKEQEEKLSSISALSREQARELIMAQVRDSISNEIAAYIRDEEDNAKSIAQNKSKEILSLAMQKYAAETTSERTVTVVEIPNEDMKGRIIGKEGRNIRSLEALTGVDLIIDDTPEAVVLSGFDPVRREVAKRALTILVQDGRIHPGRIEEVVERARTEIDMFIREAGEEAVFKTGVGKVHPDIIKLLGRMTFRTSYGQNVLKHSIEVAFLAGKLAAEIGENEMLARRAGLFHDIGKAIDHEVEGSHVSIGVELMSRYKEPKEVIDAIASHHGDSEPESIIAVLVAAADALSAARPGARSESMDSYMKRLTQLEEISNDVTGVDKAYAIQAGREVRVMVLPDKVDDLGLINIARTIKEKIEAQMTYPGTIKVTVIREKRATDVAK</sequence>